<proteinExistence type="inferred from homology"/>
<keyword id="KW-0479">Metal-binding</keyword>
<keyword id="KW-0687">Ribonucleoprotein</keyword>
<keyword id="KW-0689">Ribosomal protein</keyword>
<keyword id="KW-0694">RNA-binding</keyword>
<keyword id="KW-0699">rRNA-binding</keyword>
<keyword id="KW-0862">Zinc</keyword>
<comment type="function">
    <text evidence="1">Binds the 23S rRNA.</text>
</comment>
<comment type="cofactor">
    <cofactor evidence="1">
        <name>Zn(2+)</name>
        <dbReference type="ChEBI" id="CHEBI:29105"/>
    </cofactor>
    <text evidence="1">Binds 1 zinc ion per subunit.</text>
</comment>
<comment type="subunit">
    <text evidence="1">Part of the 50S ribosomal subunit.</text>
</comment>
<comment type="similarity">
    <text evidence="1">Belongs to the bacterial ribosomal protein bL31 family. Type A subfamily.</text>
</comment>
<sequence>MKKKIHPAYSQIIATCSCGNIIEIFSTVNVNLNLDICAKCHPFYTGKQRIIDTGGRVERFKKRFKLIKKDTV</sequence>
<accession>Q8K907</accession>
<feature type="chain" id="PRO_0000173088" description="Large ribosomal subunit protein bL31">
    <location>
        <begin position="1"/>
        <end position="72"/>
    </location>
</feature>
<feature type="binding site" evidence="1">
    <location>
        <position position="16"/>
    </location>
    <ligand>
        <name>Zn(2+)</name>
        <dbReference type="ChEBI" id="CHEBI:29105"/>
    </ligand>
</feature>
<feature type="binding site" evidence="1">
    <location>
        <position position="18"/>
    </location>
    <ligand>
        <name>Zn(2+)</name>
        <dbReference type="ChEBI" id="CHEBI:29105"/>
    </ligand>
</feature>
<feature type="binding site" evidence="1">
    <location>
        <position position="37"/>
    </location>
    <ligand>
        <name>Zn(2+)</name>
        <dbReference type="ChEBI" id="CHEBI:29105"/>
    </ligand>
</feature>
<feature type="binding site" evidence="1">
    <location>
        <position position="40"/>
    </location>
    <ligand>
        <name>Zn(2+)</name>
        <dbReference type="ChEBI" id="CHEBI:29105"/>
    </ligand>
</feature>
<protein>
    <recommendedName>
        <fullName evidence="1">Large ribosomal subunit protein bL31</fullName>
    </recommendedName>
    <alternativeName>
        <fullName evidence="2">50S ribosomal protein L31</fullName>
    </alternativeName>
</protein>
<dbReference type="EMBL" id="AE013218">
    <property type="protein sequence ID" value="AAM68094.1"/>
    <property type="molecule type" value="Genomic_DNA"/>
</dbReference>
<dbReference type="RefSeq" id="WP_011054060.1">
    <property type="nucleotide sequence ID" value="NC_004061.1"/>
</dbReference>
<dbReference type="SMR" id="Q8K907"/>
<dbReference type="STRING" id="198804.BUsg_556"/>
<dbReference type="GeneID" id="93004034"/>
<dbReference type="KEGG" id="bas:BUsg_556"/>
<dbReference type="eggNOG" id="COG0254">
    <property type="taxonomic scope" value="Bacteria"/>
</dbReference>
<dbReference type="HOGENOM" id="CLU_114306_4_3_6"/>
<dbReference type="Proteomes" id="UP000000416">
    <property type="component" value="Chromosome"/>
</dbReference>
<dbReference type="GO" id="GO:1990904">
    <property type="term" value="C:ribonucleoprotein complex"/>
    <property type="evidence" value="ECO:0007669"/>
    <property type="project" value="UniProtKB-KW"/>
</dbReference>
<dbReference type="GO" id="GO:0005840">
    <property type="term" value="C:ribosome"/>
    <property type="evidence" value="ECO:0007669"/>
    <property type="project" value="UniProtKB-KW"/>
</dbReference>
<dbReference type="GO" id="GO:0046872">
    <property type="term" value="F:metal ion binding"/>
    <property type="evidence" value="ECO:0007669"/>
    <property type="project" value="UniProtKB-KW"/>
</dbReference>
<dbReference type="GO" id="GO:0019843">
    <property type="term" value="F:rRNA binding"/>
    <property type="evidence" value="ECO:0007669"/>
    <property type="project" value="UniProtKB-KW"/>
</dbReference>
<dbReference type="GO" id="GO:0003735">
    <property type="term" value="F:structural constituent of ribosome"/>
    <property type="evidence" value="ECO:0007669"/>
    <property type="project" value="InterPro"/>
</dbReference>
<dbReference type="GO" id="GO:0006412">
    <property type="term" value="P:translation"/>
    <property type="evidence" value="ECO:0007669"/>
    <property type="project" value="UniProtKB-UniRule"/>
</dbReference>
<dbReference type="Gene3D" id="4.10.830.30">
    <property type="entry name" value="Ribosomal protein L31"/>
    <property type="match status" value="1"/>
</dbReference>
<dbReference type="HAMAP" id="MF_00501">
    <property type="entry name" value="Ribosomal_bL31_1"/>
    <property type="match status" value="1"/>
</dbReference>
<dbReference type="InterPro" id="IPR034704">
    <property type="entry name" value="Ribosomal_bL28/bL31-like_sf"/>
</dbReference>
<dbReference type="InterPro" id="IPR002150">
    <property type="entry name" value="Ribosomal_bL31"/>
</dbReference>
<dbReference type="InterPro" id="IPR027491">
    <property type="entry name" value="Ribosomal_bL31_A"/>
</dbReference>
<dbReference type="InterPro" id="IPR042105">
    <property type="entry name" value="Ribosomal_bL31_sf"/>
</dbReference>
<dbReference type="NCBIfam" id="TIGR00105">
    <property type="entry name" value="L31"/>
    <property type="match status" value="1"/>
</dbReference>
<dbReference type="NCBIfam" id="NF000612">
    <property type="entry name" value="PRK00019.1"/>
    <property type="match status" value="1"/>
</dbReference>
<dbReference type="PANTHER" id="PTHR33280">
    <property type="entry name" value="50S RIBOSOMAL PROTEIN L31, CHLOROPLASTIC"/>
    <property type="match status" value="1"/>
</dbReference>
<dbReference type="PANTHER" id="PTHR33280:SF6">
    <property type="entry name" value="LARGE RIBOSOMAL SUBUNIT PROTEIN BL31A"/>
    <property type="match status" value="1"/>
</dbReference>
<dbReference type="Pfam" id="PF01197">
    <property type="entry name" value="Ribosomal_L31"/>
    <property type="match status" value="1"/>
</dbReference>
<dbReference type="PRINTS" id="PR01249">
    <property type="entry name" value="RIBOSOMALL31"/>
</dbReference>
<dbReference type="SUPFAM" id="SSF143800">
    <property type="entry name" value="L28p-like"/>
    <property type="match status" value="1"/>
</dbReference>
<dbReference type="PROSITE" id="PS01143">
    <property type="entry name" value="RIBOSOMAL_L31"/>
    <property type="match status" value="1"/>
</dbReference>
<reference key="1">
    <citation type="journal article" date="2002" name="Science">
        <title>50 million years of genomic stasis in endosymbiotic bacteria.</title>
        <authorList>
            <person name="Tamas I."/>
            <person name="Klasson L."/>
            <person name="Canbaeck B."/>
            <person name="Naeslund A.K."/>
            <person name="Eriksson A.-S."/>
            <person name="Wernegreen J.J."/>
            <person name="Sandstroem J.P."/>
            <person name="Moran N.A."/>
            <person name="Andersson S.G.E."/>
        </authorList>
    </citation>
    <scope>NUCLEOTIDE SEQUENCE [LARGE SCALE GENOMIC DNA]</scope>
    <source>
        <strain>Sg</strain>
    </source>
</reference>
<evidence type="ECO:0000255" key="1">
    <source>
        <dbReference type="HAMAP-Rule" id="MF_00501"/>
    </source>
</evidence>
<evidence type="ECO:0000305" key="2"/>
<gene>
    <name evidence="1" type="primary">rpmE</name>
    <name type="ordered locus">BUsg_556</name>
</gene>
<name>RL31_BUCAP</name>
<organism>
    <name type="scientific">Buchnera aphidicola subsp. Schizaphis graminum (strain Sg)</name>
    <dbReference type="NCBI Taxonomy" id="198804"/>
    <lineage>
        <taxon>Bacteria</taxon>
        <taxon>Pseudomonadati</taxon>
        <taxon>Pseudomonadota</taxon>
        <taxon>Gammaproteobacteria</taxon>
        <taxon>Enterobacterales</taxon>
        <taxon>Erwiniaceae</taxon>
        <taxon>Buchnera</taxon>
    </lineage>
</organism>